<protein>
    <recommendedName>
        <fullName evidence="1">Light-independent protochlorophyllide reductase subunit B</fullName>
        <shortName evidence="1">DPOR subunit B</shortName>
        <shortName evidence="1">LI-POR subunit B</shortName>
        <ecNumber evidence="1">1.3.7.7</ecNumber>
    </recommendedName>
</protein>
<reference key="1">
    <citation type="submission" date="2007-02" db="EMBL/GenBank/DDBJ databases">
        <title>Complete sequence of chromosome 1 of Rhodobacter sphaeroides ATCC 17029.</title>
        <authorList>
            <person name="Copeland A."/>
            <person name="Lucas S."/>
            <person name="Lapidus A."/>
            <person name="Barry K."/>
            <person name="Detter J.C."/>
            <person name="Glavina del Rio T."/>
            <person name="Hammon N."/>
            <person name="Israni S."/>
            <person name="Dalin E."/>
            <person name="Tice H."/>
            <person name="Pitluck S."/>
            <person name="Kiss H."/>
            <person name="Brettin T."/>
            <person name="Bruce D."/>
            <person name="Han C."/>
            <person name="Tapia R."/>
            <person name="Gilna P."/>
            <person name="Schmutz J."/>
            <person name="Larimer F."/>
            <person name="Land M."/>
            <person name="Hauser L."/>
            <person name="Kyrpides N."/>
            <person name="Mikhailova N."/>
            <person name="Richardson P."/>
            <person name="Mackenzie C."/>
            <person name="Choudhary M."/>
            <person name="Donohue T.J."/>
            <person name="Kaplan S."/>
        </authorList>
    </citation>
    <scope>NUCLEOTIDE SEQUENCE [LARGE SCALE GENOMIC DNA]</scope>
    <source>
        <strain>ATCC 17029 / ATH 2.4.9</strain>
    </source>
</reference>
<name>BCHB_CERS1</name>
<keyword id="KW-0004">4Fe-4S</keyword>
<keyword id="KW-0067">ATP-binding</keyword>
<keyword id="KW-0077">Bacteriochlorophyll biosynthesis</keyword>
<keyword id="KW-0149">Chlorophyll biosynthesis</keyword>
<keyword id="KW-0408">Iron</keyword>
<keyword id="KW-0411">Iron-sulfur</keyword>
<keyword id="KW-0479">Metal-binding</keyword>
<keyword id="KW-0547">Nucleotide-binding</keyword>
<keyword id="KW-0560">Oxidoreductase</keyword>
<keyword id="KW-0602">Photosynthesis</keyword>
<gene>
    <name evidence="1" type="primary">bchB</name>
    <name type="ordered locus">Rsph17029_1929</name>
</gene>
<organism>
    <name type="scientific">Cereibacter sphaeroides (strain ATCC 17029 / ATH 2.4.9)</name>
    <name type="common">Rhodobacter sphaeroides</name>
    <dbReference type="NCBI Taxonomy" id="349101"/>
    <lineage>
        <taxon>Bacteria</taxon>
        <taxon>Pseudomonadati</taxon>
        <taxon>Pseudomonadota</taxon>
        <taxon>Alphaproteobacteria</taxon>
        <taxon>Rhodobacterales</taxon>
        <taxon>Paracoccaceae</taxon>
        <taxon>Cereibacter</taxon>
    </lineage>
</organism>
<comment type="function">
    <text evidence="1">Component of the dark-operative protochlorophyllide reductase (DPOR) that uses Mg-ATP and reduced ferredoxin to reduce ring D of protochlorophyllide (Pchlide) to form chlorophyllide a (Chlide). This reaction is light-independent. The NB-protein (BchN-BchB) is the catalytic component of the complex.</text>
</comment>
<comment type="catalytic activity">
    <reaction evidence="1">
        <text>chlorophyllide a + oxidized 2[4Fe-4S]-[ferredoxin] + 2 ADP + 2 phosphate = protochlorophyllide a + reduced 2[4Fe-4S]-[ferredoxin] + 2 ATP + 2 H2O</text>
        <dbReference type="Rhea" id="RHEA:28202"/>
        <dbReference type="Rhea" id="RHEA-COMP:10002"/>
        <dbReference type="Rhea" id="RHEA-COMP:10004"/>
        <dbReference type="ChEBI" id="CHEBI:15377"/>
        <dbReference type="ChEBI" id="CHEBI:30616"/>
        <dbReference type="ChEBI" id="CHEBI:33722"/>
        <dbReference type="ChEBI" id="CHEBI:33723"/>
        <dbReference type="ChEBI" id="CHEBI:43474"/>
        <dbReference type="ChEBI" id="CHEBI:83348"/>
        <dbReference type="ChEBI" id="CHEBI:83350"/>
        <dbReference type="ChEBI" id="CHEBI:456216"/>
        <dbReference type="EC" id="1.3.7.7"/>
    </reaction>
</comment>
<comment type="cofactor">
    <cofactor evidence="1">
        <name>[4Fe-4S] cluster</name>
        <dbReference type="ChEBI" id="CHEBI:49883"/>
    </cofactor>
    <text evidence="1">Binds 1 [4Fe-4S] cluster per heterodimer. The cluster is bound at the heterodimer interface by residues from both subunits.</text>
</comment>
<comment type="pathway">
    <text evidence="1">Porphyrin-containing compound metabolism; bacteriochlorophyll biosynthesis (light-independent).</text>
</comment>
<comment type="subunit">
    <text evidence="1">Protochlorophyllide reductase is composed of three subunits; BchL, BchN and BchB. Forms a heterotetramer of two BchB and two BchN subunits.</text>
</comment>
<comment type="similarity">
    <text evidence="1">Belongs to the ChlB/BchB/BchZ family.</text>
</comment>
<dbReference type="EC" id="1.3.7.7" evidence="1"/>
<dbReference type="EMBL" id="CP000577">
    <property type="protein sequence ID" value="ABN77033.1"/>
    <property type="molecule type" value="Genomic_DNA"/>
</dbReference>
<dbReference type="RefSeq" id="WP_011841329.1">
    <property type="nucleotide sequence ID" value="NC_009049.1"/>
</dbReference>
<dbReference type="SMR" id="A3PL17"/>
<dbReference type="KEGG" id="rsh:Rsph17029_1929"/>
<dbReference type="HOGENOM" id="CLU_025470_0_0_5"/>
<dbReference type="UniPathway" id="UPA00671"/>
<dbReference type="GO" id="GO:0051539">
    <property type="term" value="F:4 iron, 4 sulfur cluster binding"/>
    <property type="evidence" value="ECO:0007669"/>
    <property type="project" value="UniProtKB-UniRule"/>
</dbReference>
<dbReference type="GO" id="GO:0005524">
    <property type="term" value="F:ATP binding"/>
    <property type="evidence" value="ECO:0007669"/>
    <property type="project" value="UniProtKB-UniRule"/>
</dbReference>
<dbReference type="GO" id="GO:0046872">
    <property type="term" value="F:metal ion binding"/>
    <property type="evidence" value="ECO:0007669"/>
    <property type="project" value="UniProtKB-KW"/>
</dbReference>
<dbReference type="GO" id="GO:0016730">
    <property type="term" value="F:oxidoreductase activity, acting on iron-sulfur proteins as donors"/>
    <property type="evidence" value="ECO:0007669"/>
    <property type="project" value="InterPro"/>
</dbReference>
<dbReference type="GO" id="GO:0016636">
    <property type="term" value="F:oxidoreductase activity, acting on the CH-CH group of donors, iron-sulfur protein as acceptor"/>
    <property type="evidence" value="ECO:0007669"/>
    <property type="project" value="UniProtKB-UniRule"/>
</dbReference>
<dbReference type="GO" id="GO:0036070">
    <property type="term" value="P:light-independent bacteriochlorophyll biosynthetic process"/>
    <property type="evidence" value="ECO:0007669"/>
    <property type="project" value="UniProtKB-UniRule"/>
</dbReference>
<dbReference type="GO" id="GO:0019685">
    <property type="term" value="P:photosynthesis, dark reaction"/>
    <property type="evidence" value="ECO:0007669"/>
    <property type="project" value="InterPro"/>
</dbReference>
<dbReference type="Gene3D" id="1.20.89.20">
    <property type="match status" value="1"/>
</dbReference>
<dbReference type="Gene3D" id="3.40.50.1980">
    <property type="entry name" value="Nitrogenase molybdenum iron protein domain"/>
    <property type="match status" value="3"/>
</dbReference>
<dbReference type="Gene3D" id="1.10.8.550">
    <property type="entry name" value="Proto-chlorophyllide reductase 57 kD subunit B"/>
    <property type="match status" value="1"/>
</dbReference>
<dbReference type="HAMAP" id="MF_00353">
    <property type="entry name" value="ChlB_BchB"/>
    <property type="match status" value="1"/>
</dbReference>
<dbReference type="InterPro" id="IPR050152">
    <property type="entry name" value="ChlB/BchB/BchZ"/>
</dbReference>
<dbReference type="InterPro" id="IPR013580">
    <property type="entry name" value="LI-POR_suB-like_C"/>
</dbReference>
<dbReference type="InterPro" id="IPR000510">
    <property type="entry name" value="Nase/OxRdtase_comp1"/>
</dbReference>
<dbReference type="InterPro" id="IPR042298">
    <property type="entry name" value="P-CP_red_C"/>
</dbReference>
<dbReference type="InterPro" id="IPR005969">
    <property type="entry name" value="Protochl_reductB"/>
</dbReference>
<dbReference type="InterPro" id="IPR016209">
    <property type="entry name" value="Protochlorophyllide_Rdtase"/>
</dbReference>
<dbReference type="NCBIfam" id="TIGR01278">
    <property type="entry name" value="DPOR_BchB"/>
    <property type="match status" value="1"/>
</dbReference>
<dbReference type="PANTHER" id="PTHR33712">
    <property type="entry name" value="LIGHT-INDEPENDENT PROTOCHLOROPHYLLIDE REDUCTASE SUBUNIT B"/>
    <property type="match status" value="1"/>
</dbReference>
<dbReference type="PANTHER" id="PTHR33712:SF7">
    <property type="entry name" value="LIGHT-INDEPENDENT PROTOCHLOROPHYLLIDE REDUCTASE SUBUNIT B"/>
    <property type="match status" value="1"/>
</dbReference>
<dbReference type="Pfam" id="PF00148">
    <property type="entry name" value="Oxidored_nitro"/>
    <property type="match status" value="1"/>
</dbReference>
<dbReference type="Pfam" id="PF08369">
    <property type="entry name" value="PCP_red"/>
    <property type="match status" value="1"/>
</dbReference>
<dbReference type="PIRSF" id="PIRSF000163">
    <property type="entry name" value="PCP_ChlB"/>
    <property type="match status" value="1"/>
</dbReference>
<dbReference type="SUPFAM" id="SSF53807">
    <property type="entry name" value="Helical backbone' metal receptor"/>
    <property type="match status" value="1"/>
</dbReference>
<accession>A3PL17</accession>
<feature type="chain" id="PRO_1000048421" description="Light-independent protochlorophyllide reductase subunit B">
    <location>
        <begin position="1"/>
        <end position="534"/>
    </location>
</feature>
<feature type="region of interest" description="Disordered" evidence="2">
    <location>
        <begin position="426"/>
        <end position="446"/>
    </location>
</feature>
<feature type="active site" description="Proton donor" evidence="1">
    <location>
        <position position="274"/>
    </location>
</feature>
<feature type="binding site" evidence="1">
    <location>
        <position position="36"/>
    </location>
    <ligand>
        <name>[4Fe-4S] cluster</name>
        <dbReference type="ChEBI" id="CHEBI:49883"/>
        <note>ligand shared with heterodimeric partner</note>
    </ligand>
</feature>
<feature type="binding site" evidence="1">
    <location>
        <begin position="409"/>
        <end position="410"/>
    </location>
    <ligand>
        <name>substrate</name>
    </ligand>
</feature>
<evidence type="ECO:0000255" key="1">
    <source>
        <dbReference type="HAMAP-Rule" id="MF_00353"/>
    </source>
</evidence>
<evidence type="ECO:0000256" key="2">
    <source>
        <dbReference type="SAM" id="MobiDB-lite"/>
    </source>
</evidence>
<sequence length="534" mass="58263">MKLTLWTYEGPPHVGAMRVATGMTGMHYVLHAPQGDTYADLLFTMIERRGKRPPVSYTTFQARDLGSDTAELFQSACRDAYERFQPQAIMVGSSCTAELIQDDTGGLADALSLPVPVVHLELPSYQRKENFGADESFLQICRKLARPMERTEKVSCNLLGPTALGFRHRDDILEVTRLLEGMGIAVNAVAPMGASPADIARLGAAHFNVLLYPETGESAARWAEKTLKQPYTKTVPIGVGATRDFVAEVAALAGVAPVADDSRLRQPWWSASVDSTYLTGKRVFLFGDATHVIAAARVARDEMGFEVVGMGCYNREFARPMRAAAKGYGLEALVTDDYLEVEEAIQALAPELILGTQMERHIAKRLGIPCAVISAPVHVQDFPARYSPQMGFEGANVLFDTWIHPLTMGLEEHLLTMFREDFEFHDEAGPSHHGGKAVPASAPRADEAAEALPLTGAETAEGGSIPPEAVPPAEAAEAPAGEIVWLTDAERELKKIPFFVRGKARRNTEKFAAEKGLTRISLETLYEAKAHYAR</sequence>
<proteinExistence type="inferred from homology"/>